<gene>
    <name type="primary">DPH1</name>
    <name type="ORF">RCJMB04_32d16</name>
</gene>
<keyword id="KW-0963">Cytoplasm</keyword>
<keyword id="KW-0408">Iron</keyword>
<keyword id="KW-0411">Iron-sulfur</keyword>
<keyword id="KW-0479">Metal-binding</keyword>
<keyword id="KW-0539">Nucleus</keyword>
<keyword id="KW-1185">Reference proteome</keyword>
<keyword id="KW-0949">S-adenosyl-L-methionine</keyword>
<keyword id="KW-0808">Transferase</keyword>
<organism>
    <name type="scientific">Gallus gallus</name>
    <name type="common">Chicken</name>
    <dbReference type="NCBI Taxonomy" id="9031"/>
    <lineage>
        <taxon>Eukaryota</taxon>
        <taxon>Metazoa</taxon>
        <taxon>Chordata</taxon>
        <taxon>Craniata</taxon>
        <taxon>Vertebrata</taxon>
        <taxon>Euteleostomi</taxon>
        <taxon>Archelosauria</taxon>
        <taxon>Archosauria</taxon>
        <taxon>Dinosauria</taxon>
        <taxon>Saurischia</taxon>
        <taxon>Theropoda</taxon>
        <taxon>Coelurosauria</taxon>
        <taxon>Aves</taxon>
        <taxon>Neognathae</taxon>
        <taxon>Galloanserae</taxon>
        <taxon>Galliformes</taxon>
        <taxon>Phasianidae</taxon>
        <taxon>Phasianinae</taxon>
        <taxon>Gallus</taxon>
    </lineage>
</organism>
<evidence type="ECO:0000250" key="1">
    <source>
        <dbReference type="UniProtKB" id="O58832"/>
    </source>
</evidence>
<evidence type="ECO:0000250" key="2">
    <source>
        <dbReference type="UniProtKB" id="P40487"/>
    </source>
</evidence>
<evidence type="ECO:0000250" key="3">
    <source>
        <dbReference type="UniProtKB" id="Q5NCQ5"/>
    </source>
</evidence>
<evidence type="ECO:0000256" key="4">
    <source>
        <dbReference type="SAM" id="MobiDB-lite"/>
    </source>
</evidence>
<evidence type="ECO:0000305" key="5"/>
<reference key="1">
    <citation type="journal article" date="2005" name="Genome Biol.">
        <title>Full-length cDNAs from chicken bursal lymphocytes to facilitate gene function analysis.</title>
        <authorList>
            <person name="Caldwell R.B."/>
            <person name="Kierzek A.M."/>
            <person name="Arakawa H."/>
            <person name="Bezzubov Y."/>
            <person name="Zaim J."/>
            <person name="Fiedler P."/>
            <person name="Kutter S."/>
            <person name="Blagodatski A."/>
            <person name="Kostovska D."/>
            <person name="Koter M."/>
            <person name="Plachy J."/>
            <person name="Carninci P."/>
            <person name="Hayashizaki Y."/>
            <person name="Buerstedde J.-M."/>
        </authorList>
    </citation>
    <scope>NUCLEOTIDE SEQUENCE [LARGE SCALE MRNA]</scope>
    <source>
        <strain>CB</strain>
        <tissue>Bursa of Fabricius</tissue>
    </source>
</reference>
<protein>
    <recommendedName>
        <fullName evidence="5">2-(3-amino-3-carboxypropyl)histidine synthase subunit 1</fullName>
        <ecNumber evidence="3">2.5.1.108</ecNumber>
    </recommendedName>
    <alternativeName>
        <fullName>Diphthamide biosynthesis protein 1</fullName>
    </alternativeName>
    <alternativeName>
        <fullName evidence="5">Diphtheria toxin resistance protein 1</fullName>
    </alternativeName>
    <alternativeName>
        <fullName evidence="5">S-adenosyl-L-methionine:L-histidine 3-amino-3-carboxypropyltransferase 1</fullName>
    </alternativeName>
</protein>
<sequence>MAAPQRSGSAALLPSANGAGRAARRTARQVPEELLNNVELREAVGALPSNYNFEIPKTIWRIRQAGAKKVALQMPEGLLMFACTIADIIERFTDAEAVVMGDVTYGACCVDDYTARALGADFLVHYGHSCLIPIDATRGLKMLYVFVDIKIDTSHFLDTIRFNFAVGSSLALVSTIQFVAAVQAASQELQSQYKVCVPQCKPLSPGEILGCTSPRLARDTDAIVYLGDGRFHLESIMIANPGIPAYRYDPYSKVFSQEHYAHDRMHGARQAAIRSAARARCWGLLLGTLGRQGSPAILQHLESRLRALGRPFVRVLLSEIFPSKLQLFDSVDAWVQIACPRLSIDWGEAFSKPLLTPYEAAVALGDIEWQQPYPMDFYASQSLGPWTANHTARPAQEKPPATPSLKKWH</sequence>
<feature type="chain" id="PRO_0000307884" description="2-(3-amino-3-carboxypropyl)histidine synthase subunit 1">
    <location>
        <begin position="1"/>
        <end position="409"/>
    </location>
</feature>
<feature type="region of interest" description="Disordered" evidence="4">
    <location>
        <begin position="1"/>
        <end position="22"/>
    </location>
</feature>
<feature type="region of interest" description="Disordered" evidence="4">
    <location>
        <begin position="388"/>
        <end position="409"/>
    </location>
</feature>
<feature type="binding site" evidence="1">
    <location>
        <position position="108"/>
    </location>
    <ligand>
        <name>[4Fe-4S] cluster</name>
        <dbReference type="ChEBI" id="CHEBI:49883"/>
    </ligand>
</feature>
<feature type="binding site" evidence="1">
    <location>
        <position position="211"/>
    </location>
    <ligand>
        <name>[4Fe-4S] cluster</name>
        <dbReference type="ChEBI" id="CHEBI:49883"/>
    </ligand>
</feature>
<feature type="binding site" evidence="1">
    <location>
        <position position="339"/>
    </location>
    <ligand>
        <name>[4Fe-4S] cluster</name>
        <dbReference type="ChEBI" id="CHEBI:49883"/>
    </ligand>
</feature>
<dbReference type="EC" id="2.5.1.108" evidence="3"/>
<dbReference type="EMBL" id="AJ721005">
    <property type="protein sequence ID" value="CAG32664.1"/>
    <property type="molecule type" value="mRNA"/>
</dbReference>
<dbReference type="SMR" id="Q5ZHX9"/>
<dbReference type="FunCoup" id="Q5ZHX9">
    <property type="interactions" value="1894"/>
</dbReference>
<dbReference type="STRING" id="9031.ENSGALP00000004864"/>
<dbReference type="GlyGen" id="Q5ZHX9">
    <property type="glycosylation" value="1 site"/>
</dbReference>
<dbReference type="PaxDb" id="9031-ENSGALP00000004864"/>
<dbReference type="VEuPathDB" id="HostDB:geneid_417564"/>
<dbReference type="eggNOG" id="KOG2648">
    <property type="taxonomic scope" value="Eukaryota"/>
</dbReference>
<dbReference type="InParanoid" id="Q5ZHX9"/>
<dbReference type="OrthoDB" id="1649088at2759"/>
<dbReference type="PhylomeDB" id="Q5ZHX9"/>
<dbReference type="UniPathway" id="UPA00559"/>
<dbReference type="Proteomes" id="UP000000539">
    <property type="component" value="Unassembled WGS sequence"/>
</dbReference>
<dbReference type="GO" id="GO:0120513">
    <property type="term" value="C:2-(3-amino-3-carboxypropyl)histidine synthase complex"/>
    <property type="evidence" value="ECO:0000250"/>
    <property type="project" value="UniProtKB"/>
</dbReference>
<dbReference type="GO" id="GO:0005737">
    <property type="term" value="C:cytoplasm"/>
    <property type="evidence" value="ECO:0007669"/>
    <property type="project" value="UniProtKB-SubCell"/>
</dbReference>
<dbReference type="GO" id="GO:0005634">
    <property type="term" value="C:nucleus"/>
    <property type="evidence" value="ECO:0007669"/>
    <property type="project" value="UniProtKB-SubCell"/>
</dbReference>
<dbReference type="GO" id="GO:0090560">
    <property type="term" value="F:2-(3-amino-3-carboxypropyl)histidine synthase activity"/>
    <property type="evidence" value="ECO:0007669"/>
    <property type="project" value="UniProtKB-EC"/>
</dbReference>
<dbReference type="GO" id="GO:0051539">
    <property type="term" value="F:4 iron, 4 sulfur cluster binding"/>
    <property type="evidence" value="ECO:0000250"/>
    <property type="project" value="UniProtKB"/>
</dbReference>
<dbReference type="GO" id="GO:0046872">
    <property type="term" value="F:metal ion binding"/>
    <property type="evidence" value="ECO:0007669"/>
    <property type="project" value="UniProtKB-KW"/>
</dbReference>
<dbReference type="GO" id="GO:0017183">
    <property type="term" value="P:protein histidyl modification to diphthamide"/>
    <property type="evidence" value="ECO:0000250"/>
    <property type="project" value="UniProtKB"/>
</dbReference>
<dbReference type="FunFam" id="3.40.50.11840:FF:000001">
    <property type="entry name" value="2-(3-amino-3-carboxypropyl)histidine synthase subunit 1"/>
    <property type="match status" value="1"/>
</dbReference>
<dbReference type="FunFam" id="3.40.50.11850:FF:000001">
    <property type="entry name" value="2-(3-amino-3-carboxypropyl)histidine synthase subunit 1"/>
    <property type="match status" value="1"/>
</dbReference>
<dbReference type="FunFam" id="3.40.50.11860:FF:000002">
    <property type="entry name" value="2-(3-amino-3-carboxypropyl)histidine synthase subunit 1"/>
    <property type="match status" value="1"/>
</dbReference>
<dbReference type="Gene3D" id="3.40.50.11840">
    <property type="entry name" value="Diphthamide synthesis DPH1/DPH2 domain 1"/>
    <property type="match status" value="1"/>
</dbReference>
<dbReference type="Gene3D" id="3.40.50.11850">
    <property type="entry name" value="Diphthamide synthesis DPH1/DPH2 domain 2"/>
    <property type="match status" value="1"/>
</dbReference>
<dbReference type="Gene3D" id="3.40.50.11860">
    <property type="entry name" value="Diphthamide synthesis DPH1/DPH2 domain 3"/>
    <property type="match status" value="1"/>
</dbReference>
<dbReference type="InterPro" id="IPR016435">
    <property type="entry name" value="DPH1/DPH2"/>
</dbReference>
<dbReference type="InterPro" id="IPR042263">
    <property type="entry name" value="DPH1/DPH2_1"/>
</dbReference>
<dbReference type="InterPro" id="IPR042264">
    <property type="entry name" value="DPH1/DPH2_2"/>
</dbReference>
<dbReference type="InterPro" id="IPR042265">
    <property type="entry name" value="DPH1/DPH2_3"/>
</dbReference>
<dbReference type="InterPro" id="IPR035435">
    <property type="entry name" value="DPH1/DPH2_euk_archaea"/>
</dbReference>
<dbReference type="NCBIfam" id="TIGR00322">
    <property type="entry name" value="diphth2_R"/>
    <property type="match status" value="1"/>
</dbReference>
<dbReference type="PANTHER" id="PTHR10762:SF1">
    <property type="entry name" value="2-(3-AMINO-3-CARBOXYPROPYL)HISTIDINE SYNTHASE SUBUNIT 1"/>
    <property type="match status" value="1"/>
</dbReference>
<dbReference type="PANTHER" id="PTHR10762">
    <property type="entry name" value="DIPHTHAMIDE BIOSYNTHESIS PROTEIN"/>
    <property type="match status" value="1"/>
</dbReference>
<dbReference type="Pfam" id="PF01866">
    <property type="entry name" value="Diphthamide_syn"/>
    <property type="match status" value="1"/>
</dbReference>
<dbReference type="PIRSF" id="PIRSF004967">
    <property type="entry name" value="DPH1"/>
    <property type="match status" value="1"/>
</dbReference>
<dbReference type="SFLD" id="SFLDS00032">
    <property type="entry name" value="Radical_SAM_3-amino-3-carboxyp"/>
    <property type="match status" value="1"/>
</dbReference>
<accession>Q5ZHX9</accession>
<name>DPH1_CHICK</name>
<comment type="function">
    <text evidence="2 3">Catalyzes the first step of diphthamide biosynthesis, a post-translational modification of histidine which occurs in elongation factor 2 (By similarity). DPH1 and DPH2 transfer a 3-amino-3-carboxypropyl (ACP) group from S-adenosyl-L-methionine (SAM) to a histidine residue, the reaction is assisted by a reduction system comprising DPH3 and a NADH-dependent reductase (By similarity).</text>
</comment>
<comment type="catalytic activity">
    <reaction evidence="3">
        <text>L-histidyl-[translation elongation factor 2] + S-adenosyl-L-methionine = 2-[(3S)-amino-3-carboxypropyl]-L-histidyl-[translation elongation factor 2] + S-methyl-5'-thioadenosine + H(+)</text>
        <dbReference type="Rhea" id="RHEA:36783"/>
        <dbReference type="Rhea" id="RHEA-COMP:9748"/>
        <dbReference type="Rhea" id="RHEA-COMP:9749"/>
        <dbReference type="ChEBI" id="CHEBI:15378"/>
        <dbReference type="ChEBI" id="CHEBI:17509"/>
        <dbReference type="ChEBI" id="CHEBI:29979"/>
        <dbReference type="ChEBI" id="CHEBI:59789"/>
        <dbReference type="ChEBI" id="CHEBI:73995"/>
        <dbReference type="EC" id="2.5.1.108"/>
    </reaction>
</comment>
<comment type="cofactor">
    <cofactor evidence="2">
        <name>[4Fe-4S] cluster</name>
        <dbReference type="ChEBI" id="CHEBI:49883"/>
    </cofactor>
    <text evidence="2">Binds 1 [4Fe-4S] cluster per subunit. The cluster is coordinated with 3 cysteines and an exchangeable S-adenosyl-L-methionine.</text>
</comment>
<comment type="pathway">
    <text>Protein modification; peptidyl-diphthamide biosynthesis.</text>
</comment>
<comment type="subunit">
    <text evidence="2">Component of the 2-(3-amino-3-carboxypropyl)histidine synthase complex composed of DPH1, DPH2, DPH3 and a NADH-dependent reductase.</text>
</comment>
<comment type="subcellular location">
    <subcellularLocation>
        <location evidence="3">Nucleus</location>
    </subcellularLocation>
    <subcellularLocation>
        <location evidence="3">Cytoplasm</location>
    </subcellularLocation>
</comment>
<comment type="similarity">
    <text evidence="5">Belongs to the DPH1/DPH2 family. DPH1 subfamily.</text>
</comment>
<proteinExistence type="evidence at transcript level"/>